<evidence type="ECO:0000255" key="1">
    <source>
        <dbReference type="HAMAP-Rule" id="MF_00502"/>
    </source>
</evidence>
<evidence type="ECO:0000305" key="2"/>
<sequence length="83" mass="9548">MKQGIHPDYHPVVFMDSATGFKFISGSTKTSKETVKWEDGKEYPLVRVEISSDSHPFYTGKQKFTQADGRVDRFNKKYGLDKK</sequence>
<comment type="subunit">
    <text evidence="1">Part of the 50S ribosomal subunit.</text>
</comment>
<comment type="similarity">
    <text evidence="1">Belongs to the bacterial ribosomal protein bL31 family. Type B subfamily.</text>
</comment>
<proteinExistence type="inferred from homology"/>
<organism>
    <name type="scientific">Lacticaseibacillus casei (strain BL23)</name>
    <name type="common">Lactobacillus casei</name>
    <dbReference type="NCBI Taxonomy" id="543734"/>
    <lineage>
        <taxon>Bacteria</taxon>
        <taxon>Bacillati</taxon>
        <taxon>Bacillota</taxon>
        <taxon>Bacilli</taxon>
        <taxon>Lactobacillales</taxon>
        <taxon>Lactobacillaceae</taxon>
        <taxon>Lacticaseibacillus</taxon>
    </lineage>
</organism>
<name>RL31B_LACCB</name>
<feature type="chain" id="PRO_1000126814" description="Large ribosomal subunit protein bL31B">
    <location>
        <begin position="1"/>
        <end position="83"/>
    </location>
</feature>
<protein>
    <recommendedName>
        <fullName evidence="1">Large ribosomal subunit protein bL31B</fullName>
    </recommendedName>
    <alternativeName>
        <fullName evidence="2">50S ribosomal protein L31 type B</fullName>
    </alternativeName>
</protein>
<gene>
    <name evidence="1" type="primary">rpmE2</name>
    <name type="ordered locus">LCABL_27360</name>
</gene>
<keyword id="KW-0687">Ribonucleoprotein</keyword>
<keyword id="KW-0689">Ribosomal protein</keyword>
<reference key="1">
    <citation type="submission" date="2008-06" db="EMBL/GenBank/DDBJ databases">
        <title>Lactobacillus casei BL23 complete genome sequence.</title>
        <authorList>
            <person name="Maze A."/>
            <person name="Boel G."/>
            <person name="Bourand A."/>
            <person name="Loux V."/>
            <person name="Gibrat J.F."/>
            <person name="Zuniga M."/>
            <person name="Hartke A."/>
            <person name="Deutscher J."/>
        </authorList>
    </citation>
    <scope>NUCLEOTIDE SEQUENCE [LARGE SCALE GENOMIC DNA]</scope>
    <source>
        <strain>BL23</strain>
    </source>
</reference>
<dbReference type="EMBL" id="FM177140">
    <property type="protein sequence ID" value="CAQ67787.1"/>
    <property type="molecule type" value="Genomic_DNA"/>
</dbReference>
<dbReference type="SMR" id="B3WAR8"/>
<dbReference type="KEGG" id="lcb:LCABL_27360"/>
<dbReference type="HOGENOM" id="CLU_114306_2_2_9"/>
<dbReference type="GO" id="GO:1990904">
    <property type="term" value="C:ribonucleoprotein complex"/>
    <property type="evidence" value="ECO:0007669"/>
    <property type="project" value="UniProtKB-KW"/>
</dbReference>
<dbReference type="GO" id="GO:0005840">
    <property type="term" value="C:ribosome"/>
    <property type="evidence" value="ECO:0007669"/>
    <property type="project" value="UniProtKB-KW"/>
</dbReference>
<dbReference type="GO" id="GO:0003735">
    <property type="term" value="F:structural constituent of ribosome"/>
    <property type="evidence" value="ECO:0007669"/>
    <property type="project" value="InterPro"/>
</dbReference>
<dbReference type="GO" id="GO:0006412">
    <property type="term" value="P:translation"/>
    <property type="evidence" value="ECO:0007669"/>
    <property type="project" value="UniProtKB-UniRule"/>
</dbReference>
<dbReference type="Gene3D" id="4.10.830.30">
    <property type="entry name" value="Ribosomal protein L31"/>
    <property type="match status" value="1"/>
</dbReference>
<dbReference type="HAMAP" id="MF_00502">
    <property type="entry name" value="Ribosomal_bL31_2"/>
    <property type="match status" value="1"/>
</dbReference>
<dbReference type="InterPro" id="IPR034704">
    <property type="entry name" value="Ribosomal_bL28/bL31-like_sf"/>
</dbReference>
<dbReference type="InterPro" id="IPR002150">
    <property type="entry name" value="Ribosomal_bL31"/>
</dbReference>
<dbReference type="InterPro" id="IPR027493">
    <property type="entry name" value="Ribosomal_bL31_B"/>
</dbReference>
<dbReference type="InterPro" id="IPR042105">
    <property type="entry name" value="Ribosomal_bL31_sf"/>
</dbReference>
<dbReference type="NCBIfam" id="TIGR00105">
    <property type="entry name" value="L31"/>
    <property type="match status" value="1"/>
</dbReference>
<dbReference type="NCBIfam" id="NF002462">
    <property type="entry name" value="PRK01678.1"/>
    <property type="match status" value="1"/>
</dbReference>
<dbReference type="PANTHER" id="PTHR33280">
    <property type="entry name" value="50S RIBOSOMAL PROTEIN L31, CHLOROPLASTIC"/>
    <property type="match status" value="1"/>
</dbReference>
<dbReference type="PANTHER" id="PTHR33280:SF1">
    <property type="entry name" value="LARGE RIBOSOMAL SUBUNIT PROTEIN BL31C"/>
    <property type="match status" value="1"/>
</dbReference>
<dbReference type="Pfam" id="PF01197">
    <property type="entry name" value="Ribosomal_L31"/>
    <property type="match status" value="1"/>
</dbReference>
<dbReference type="PRINTS" id="PR01249">
    <property type="entry name" value="RIBOSOMALL31"/>
</dbReference>
<dbReference type="SUPFAM" id="SSF143800">
    <property type="entry name" value="L28p-like"/>
    <property type="match status" value="1"/>
</dbReference>
<dbReference type="PROSITE" id="PS01143">
    <property type="entry name" value="RIBOSOMAL_L31"/>
    <property type="match status" value="1"/>
</dbReference>
<accession>B3WAR8</accession>